<proteinExistence type="inferred from homology"/>
<comment type="function">
    <text evidence="2">Component of the ubiquinol-cytochrome c reductase complex (complex III or cytochrome b-c1 complex) that is part of the mitochondrial respiratory chain. The b-c1 complex mediates electron transfer from ubiquinol to cytochrome c. Contributes to the generation of a proton gradient across the mitochondrial membrane that is then used for ATP synthesis.</text>
</comment>
<comment type="cofactor">
    <cofactor evidence="2">
        <name>heme b</name>
        <dbReference type="ChEBI" id="CHEBI:60344"/>
    </cofactor>
    <text evidence="2">Binds 2 heme b groups non-covalently.</text>
</comment>
<comment type="subunit">
    <text evidence="2">The cytochrome bc1 complex contains 11 subunits: 3 respiratory subunits (MT-CYB, CYC1 and UQCRFS1), 2 core proteins (UQCRC1 and UQCRC2) and 6 low-molecular weight proteins (UQCRH/QCR6, UQCRB/QCR7, UQCRQ/QCR8, UQCR10/QCR9, UQCR11/QCR10 and a cleavage product of UQCRFS1). This cytochrome bc1 complex then forms a dimer.</text>
</comment>
<comment type="subcellular location">
    <subcellularLocation>
        <location evidence="2">Mitochondrion inner membrane</location>
        <topology evidence="2">Multi-pass membrane protein</topology>
    </subcellularLocation>
</comment>
<comment type="miscellaneous">
    <text evidence="1">Heme 1 (or BL or b562) is low-potential and absorbs at about 562 nm, and heme 2 (or BH or b566) is high-potential and absorbs at about 566 nm.</text>
</comment>
<comment type="similarity">
    <text evidence="3 4">Belongs to the cytochrome b family.</text>
</comment>
<comment type="caution">
    <text evidence="2">The full-length protein contains only eight transmembrane helices, not nine as predicted by bioinformatics tools.</text>
</comment>
<keyword id="KW-0249">Electron transport</keyword>
<keyword id="KW-0349">Heme</keyword>
<keyword id="KW-0408">Iron</keyword>
<keyword id="KW-0472">Membrane</keyword>
<keyword id="KW-0479">Metal-binding</keyword>
<keyword id="KW-0496">Mitochondrion</keyword>
<keyword id="KW-0999">Mitochondrion inner membrane</keyword>
<keyword id="KW-0679">Respiratory chain</keyword>
<keyword id="KW-0812">Transmembrane</keyword>
<keyword id="KW-1133">Transmembrane helix</keyword>
<keyword id="KW-0813">Transport</keyword>
<keyword id="KW-0830">Ubiquinone</keyword>
<name>CYB_RHIFI</name>
<feature type="chain" id="PRO_0000061497" description="Cytochrome b">
    <location>
        <begin position="1"/>
        <end position="379"/>
    </location>
</feature>
<feature type="transmembrane region" description="Helical" evidence="2">
    <location>
        <begin position="33"/>
        <end position="53"/>
    </location>
</feature>
<feature type="transmembrane region" description="Helical" evidence="2">
    <location>
        <begin position="77"/>
        <end position="98"/>
    </location>
</feature>
<feature type="transmembrane region" description="Helical" evidence="2">
    <location>
        <begin position="113"/>
        <end position="133"/>
    </location>
</feature>
<feature type="transmembrane region" description="Helical" evidence="2">
    <location>
        <begin position="178"/>
        <end position="198"/>
    </location>
</feature>
<feature type="transmembrane region" description="Helical" evidence="2">
    <location>
        <begin position="226"/>
        <end position="246"/>
    </location>
</feature>
<feature type="transmembrane region" description="Helical" evidence="2">
    <location>
        <begin position="288"/>
        <end position="308"/>
    </location>
</feature>
<feature type="transmembrane region" description="Helical" evidence="2">
    <location>
        <begin position="320"/>
        <end position="340"/>
    </location>
</feature>
<feature type="transmembrane region" description="Helical" evidence="2">
    <location>
        <begin position="347"/>
        <end position="367"/>
    </location>
</feature>
<feature type="binding site" description="axial binding residue" evidence="2">
    <location>
        <position position="83"/>
    </location>
    <ligand>
        <name>heme b</name>
        <dbReference type="ChEBI" id="CHEBI:60344"/>
        <label>b562</label>
    </ligand>
    <ligandPart>
        <name>Fe</name>
        <dbReference type="ChEBI" id="CHEBI:18248"/>
    </ligandPart>
</feature>
<feature type="binding site" description="axial binding residue" evidence="2">
    <location>
        <position position="97"/>
    </location>
    <ligand>
        <name>heme b</name>
        <dbReference type="ChEBI" id="CHEBI:60344"/>
        <label>b566</label>
    </ligand>
    <ligandPart>
        <name>Fe</name>
        <dbReference type="ChEBI" id="CHEBI:18248"/>
    </ligandPart>
</feature>
<feature type="binding site" description="axial binding residue" evidence="2">
    <location>
        <position position="182"/>
    </location>
    <ligand>
        <name>heme b</name>
        <dbReference type="ChEBI" id="CHEBI:60344"/>
        <label>b562</label>
    </ligand>
    <ligandPart>
        <name>Fe</name>
        <dbReference type="ChEBI" id="CHEBI:18248"/>
    </ligandPart>
</feature>
<feature type="binding site" description="axial binding residue" evidence="2">
    <location>
        <position position="196"/>
    </location>
    <ligand>
        <name>heme b</name>
        <dbReference type="ChEBI" id="CHEBI:60344"/>
        <label>b566</label>
    </ligand>
    <ligandPart>
        <name>Fe</name>
        <dbReference type="ChEBI" id="CHEBI:18248"/>
    </ligandPart>
</feature>
<feature type="binding site" evidence="2">
    <location>
        <position position="201"/>
    </location>
    <ligand>
        <name>a ubiquinone</name>
        <dbReference type="ChEBI" id="CHEBI:16389"/>
    </ligand>
</feature>
<reference key="1">
    <citation type="journal article" date="1999" name="J. Mammal.">
        <title>Systematics of the genera Carollia and Rhinophylla based on the cytochrome b gene.</title>
        <authorList>
            <person name="Wright A.J."/>
            <person name="Van Den Bussche R.A."/>
            <person name="Lim B.K."/>
            <person name="Engstrom M.D."/>
            <person name="Baker R.J."/>
        </authorList>
    </citation>
    <scope>NUCLEOTIDE SEQUENCE [GENOMIC DNA]</scope>
    <source>
        <strain>Isolate TK 46034</strain>
    </source>
</reference>
<dbReference type="EMBL" id="AF187032">
    <property type="protein sequence ID" value="AAG25913.1"/>
    <property type="molecule type" value="Genomic_DNA"/>
</dbReference>
<dbReference type="SMR" id="Q9GAM7"/>
<dbReference type="GO" id="GO:0005743">
    <property type="term" value="C:mitochondrial inner membrane"/>
    <property type="evidence" value="ECO:0007669"/>
    <property type="project" value="UniProtKB-SubCell"/>
</dbReference>
<dbReference type="GO" id="GO:0045275">
    <property type="term" value="C:respiratory chain complex III"/>
    <property type="evidence" value="ECO:0007669"/>
    <property type="project" value="InterPro"/>
</dbReference>
<dbReference type="GO" id="GO:0046872">
    <property type="term" value="F:metal ion binding"/>
    <property type="evidence" value="ECO:0007669"/>
    <property type="project" value="UniProtKB-KW"/>
</dbReference>
<dbReference type="GO" id="GO:0008121">
    <property type="term" value="F:ubiquinol-cytochrome-c reductase activity"/>
    <property type="evidence" value="ECO:0007669"/>
    <property type="project" value="InterPro"/>
</dbReference>
<dbReference type="GO" id="GO:0006122">
    <property type="term" value="P:mitochondrial electron transport, ubiquinol to cytochrome c"/>
    <property type="evidence" value="ECO:0007669"/>
    <property type="project" value="TreeGrafter"/>
</dbReference>
<dbReference type="CDD" id="cd00290">
    <property type="entry name" value="cytochrome_b_C"/>
    <property type="match status" value="1"/>
</dbReference>
<dbReference type="CDD" id="cd00284">
    <property type="entry name" value="Cytochrome_b_N"/>
    <property type="match status" value="1"/>
</dbReference>
<dbReference type="FunFam" id="1.20.810.10:FF:000002">
    <property type="entry name" value="Cytochrome b"/>
    <property type="match status" value="1"/>
</dbReference>
<dbReference type="Gene3D" id="1.20.810.10">
    <property type="entry name" value="Cytochrome Bc1 Complex, Chain C"/>
    <property type="match status" value="1"/>
</dbReference>
<dbReference type="InterPro" id="IPR005798">
    <property type="entry name" value="Cyt_b/b6_C"/>
</dbReference>
<dbReference type="InterPro" id="IPR036150">
    <property type="entry name" value="Cyt_b/b6_C_sf"/>
</dbReference>
<dbReference type="InterPro" id="IPR005797">
    <property type="entry name" value="Cyt_b/b6_N"/>
</dbReference>
<dbReference type="InterPro" id="IPR027387">
    <property type="entry name" value="Cytb/b6-like_sf"/>
</dbReference>
<dbReference type="InterPro" id="IPR030689">
    <property type="entry name" value="Cytochrome_b"/>
</dbReference>
<dbReference type="InterPro" id="IPR048260">
    <property type="entry name" value="Cytochrome_b_C_euk/bac"/>
</dbReference>
<dbReference type="InterPro" id="IPR048259">
    <property type="entry name" value="Cytochrome_b_N_euk/bac"/>
</dbReference>
<dbReference type="InterPro" id="IPR016174">
    <property type="entry name" value="Di-haem_cyt_TM"/>
</dbReference>
<dbReference type="PANTHER" id="PTHR19271">
    <property type="entry name" value="CYTOCHROME B"/>
    <property type="match status" value="1"/>
</dbReference>
<dbReference type="PANTHER" id="PTHR19271:SF16">
    <property type="entry name" value="CYTOCHROME B"/>
    <property type="match status" value="1"/>
</dbReference>
<dbReference type="Pfam" id="PF00032">
    <property type="entry name" value="Cytochrom_B_C"/>
    <property type="match status" value="1"/>
</dbReference>
<dbReference type="Pfam" id="PF00033">
    <property type="entry name" value="Cytochrome_B"/>
    <property type="match status" value="1"/>
</dbReference>
<dbReference type="PIRSF" id="PIRSF038885">
    <property type="entry name" value="COB"/>
    <property type="match status" value="1"/>
</dbReference>
<dbReference type="SUPFAM" id="SSF81648">
    <property type="entry name" value="a domain/subunit of cytochrome bc1 complex (Ubiquinol-cytochrome c reductase)"/>
    <property type="match status" value="1"/>
</dbReference>
<dbReference type="SUPFAM" id="SSF81342">
    <property type="entry name" value="Transmembrane di-heme cytochromes"/>
    <property type="match status" value="1"/>
</dbReference>
<dbReference type="PROSITE" id="PS51003">
    <property type="entry name" value="CYTB_CTER"/>
    <property type="match status" value="1"/>
</dbReference>
<dbReference type="PROSITE" id="PS51002">
    <property type="entry name" value="CYTB_NTER"/>
    <property type="match status" value="1"/>
</dbReference>
<gene>
    <name type="primary">MT-CYB</name>
    <name type="synonym">COB</name>
    <name type="synonym">CYTB</name>
    <name type="synonym">MTCYB</name>
</gene>
<sequence>MTNIRKTHPLLKIINSSFVDLPAPSSLSAWWNFGSLLGVCLAVQILTGLFLAMHYTSDTATTFNSVTHICRDVNYGWLIRYLHANGASMFFICLYLHVGRGLYYGSYTYSETWNVGILLLFAVMATAFMGYVLPWGQMSFWGATVITNLLSAIPYIGTDLVQWIWGGFSVDKATLTRFFAFHFLLPFIVTALVMVHLLFLHETGSNNPTGIPSDSDMIPFHPYYTIKDILGFLIMLTALSALVLFSPDLLGDPDNYTPANPLNTPPHIKPEWYFLFAYAILRSIPNKLGGVLALVMSILILAIVPVLHTSKQRSMMFRPLSQCLFWLLVAILFTLTWIGGQPVERPFIIIGQTASVLYFLIILILMPVTSLMENYLLKW</sequence>
<organism>
    <name type="scientific">Rhinophylla fischerae</name>
    <name type="common">Fischer's little fruit bat</name>
    <dbReference type="NCBI Taxonomy" id="138706"/>
    <lineage>
        <taxon>Eukaryota</taxon>
        <taxon>Metazoa</taxon>
        <taxon>Chordata</taxon>
        <taxon>Craniata</taxon>
        <taxon>Vertebrata</taxon>
        <taxon>Euteleostomi</taxon>
        <taxon>Mammalia</taxon>
        <taxon>Eutheria</taxon>
        <taxon>Laurasiatheria</taxon>
        <taxon>Chiroptera</taxon>
        <taxon>Yangochiroptera</taxon>
        <taxon>Phyllostomidae</taxon>
        <taxon>Carolliinae</taxon>
        <taxon>Rhinophylla</taxon>
    </lineage>
</organism>
<protein>
    <recommendedName>
        <fullName>Cytochrome b</fullName>
    </recommendedName>
    <alternativeName>
        <fullName>Complex III subunit 3</fullName>
    </alternativeName>
    <alternativeName>
        <fullName>Complex III subunit III</fullName>
    </alternativeName>
    <alternativeName>
        <fullName>Cytochrome b-c1 complex subunit 3</fullName>
    </alternativeName>
    <alternativeName>
        <fullName>Ubiquinol-cytochrome-c reductase complex cytochrome b subunit</fullName>
    </alternativeName>
</protein>
<geneLocation type="mitochondrion"/>
<accession>Q9GAM7</accession>
<evidence type="ECO:0000250" key="1"/>
<evidence type="ECO:0000250" key="2">
    <source>
        <dbReference type="UniProtKB" id="P00157"/>
    </source>
</evidence>
<evidence type="ECO:0000255" key="3">
    <source>
        <dbReference type="PROSITE-ProRule" id="PRU00967"/>
    </source>
</evidence>
<evidence type="ECO:0000255" key="4">
    <source>
        <dbReference type="PROSITE-ProRule" id="PRU00968"/>
    </source>
</evidence>